<feature type="chain" id="PRO_0000115840" description="Transcriptional regulator ICP22 homolog">
    <location>
        <begin position="1"/>
        <end position="293"/>
    </location>
</feature>
<feature type="region of interest" description="Disordered" evidence="1">
    <location>
        <begin position="1"/>
        <end position="49"/>
    </location>
</feature>
<feature type="region of interest" description="Disordered" evidence="1">
    <location>
        <begin position="175"/>
        <end position="293"/>
    </location>
</feature>
<feature type="compositionally biased region" description="Low complexity" evidence="1">
    <location>
        <begin position="21"/>
        <end position="31"/>
    </location>
</feature>
<feature type="compositionally biased region" description="Acidic residues" evidence="1">
    <location>
        <begin position="190"/>
        <end position="210"/>
    </location>
</feature>
<feature type="compositionally biased region" description="Basic residues" evidence="1">
    <location>
        <begin position="272"/>
        <end position="281"/>
    </location>
</feature>
<feature type="compositionally biased region" description="Basic and acidic residues" evidence="1">
    <location>
        <begin position="282"/>
        <end position="293"/>
    </location>
</feature>
<proteinExistence type="evidence at protein level"/>
<organismHost>
    <name type="scientific">Equus caballus</name>
    <name type="common">Horse</name>
    <dbReference type="NCBI Taxonomy" id="9796"/>
</organismHost>
<reference key="1">
    <citation type="journal article" date="1992" name="J. Virol.">
        <title>ICP22 homolog of equine herpesvirus 1: expression from early and late promoters.</title>
        <authorList>
            <person name="Holden V.R."/>
            <person name="Yalamanchili R.R."/>
            <person name="Harty R.N."/>
            <person name="O'Callaghan D.J."/>
        </authorList>
    </citation>
    <scope>NUCLEOTIDE SEQUENCE [GENOMIC DNA]</scope>
</reference>
<name>ICP22_EHV1K</name>
<dbReference type="EMBL" id="M76726">
    <property type="protein sequence ID" value="AAA46092.1"/>
    <property type="molecule type" value="Genomic_DNA"/>
</dbReference>
<dbReference type="EMBL" id="M25345">
    <property type="protein sequence ID" value="AAA46096.1"/>
    <property type="status" value="ALT_INIT"/>
    <property type="molecule type" value="Genomic_DNA"/>
</dbReference>
<dbReference type="IntAct" id="P68337">
    <property type="interactions" value="1"/>
</dbReference>
<dbReference type="KEGG" id="vg:2948568"/>
<dbReference type="KEGG" id="vg:2948573"/>
<dbReference type="GO" id="GO:0042025">
    <property type="term" value="C:host cell nucleus"/>
    <property type="evidence" value="ECO:0000314"/>
    <property type="project" value="AgBase"/>
</dbReference>
<dbReference type="GO" id="GO:0042802">
    <property type="term" value="F:identical protein binding"/>
    <property type="evidence" value="ECO:0000353"/>
    <property type="project" value="IntAct"/>
</dbReference>
<dbReference type="GO" id="GO:0010468">
    <property type="term" value="P:regulation of gene expression"/>
    <property type="evidence" value="ECO:0000315"/>
    <property type="project" value="AgBase"/>
</dbReference>
<dbReference type="InterPro" id="IPR003403">
    <property type="entry name" value="IE68"/>
</dbReference>
<dbReference type="Pfam" id="PF02479">
    <property type="entry name" value="Herpes_IE68"/>
    <property type="match status" value="1"/>
</dbReference>
<keyword id="KW-0244">Early protein</keyword>
<sequence length="293" mass="32117">MPHGQPCGACDGSCRMAQRGTPSTSPLIPSLTPSPPAGDPSPRSSQRIDAVRVPARLPGGSDHPEYGMPLSPRALRPYLARGPGAFCAPPWRPDVNRLAGDVNRLFRGISTSSIHVTEDSRTLRRALLDFYAMGYTHTRPTLECWQSLLQLLPEQSFPLRATLRALNSEDRYEQRFLEPPSDPPNTLFGEECDVSGDESPSEEEEEDEASGESSVSEFSPEEETASSEYDSFSDVGEDDSSCTGKWSSSESESDSESDAPTNNHHPTTRASAAKKRRKRQPPKGERPTKSARR</sequence>
<gene>
    <name type="primary">IR4</name>
</gene>
<evidence type="ECO:0000256" key="1">
    <source>
        <dbReference type="SAM" id="MobiDB-lite"/>
    </source>
</evidence>
<evidence type="ECO:0000305" key="2"/>
<organism>
    <name type="scientific">Equine herpesvirus 1 (strain Kentucky A)</name>
    <name type="common">EHV-1</name>
    <name type="synonym">Equine abortion virus</name>
    <dbReference type="NCBI Taxonomy" id="10329"/>
    <lineage>
        <taxon>Viruses</taxon>
        <taxon>Duplodnaviria</taxon>
        <taxon>Heunggongvirae</taxon>
        <taxon>Peploviricota</taxon>
        <taxon>Herviviricetes</taxon>
        <taxon>Herpesvirales</taxon>
        <taxon>Orthoherpesviridae</taxon>
        <taxon>Alphaherpesvirinae</taxon>
        <taxon>Varicellovirus</taxon>
        <taxon>Varicellovirus equidalpha1</taxon>
        <taxon>Equid alphaherpesvirus 1</taxon>
    </lineage>
</organism>
<accession>P68337</accession>
<accession>P28940</accession>
<protein>
    <recommendedName>
        <fullName>Transcriptional regulator ICP22 homolog</fullName>
    </recommendedName>
    <alternativeName>
        <fullName>IR4 protein</fullName>
    </alternativeName>
    <alternativeName>
        <fullName>Immediate-early protein IE68</fullName>
    </alternativeName>
    <alternativeName>
        <fullName>In vitro host-range factor</fullName>
    </alternativeName>
    <alternativeName>
        <fullName>ORF S1-2</fullName>
    </alternativeName>
</protein>
<comment type="interaction">
    <interactant intactId="EBI-11711710">
        <id>P68337</id>
    </interactant>
    <interactant intactId="EBI-11702772">
        <id>P17473</id>
        <label>IE</label>
    </interactant>
    <organismsDiffer>false</organismsDiffer>
    <experiments>11</experiments>
</comment>
<comment type="interaction">
    <interactant intactId="EBI-11711710">
        <id>P68337</id>
    </interactant>
    <interactant intactId="EBI-11711710">
        <id>P68337</id>
        <label>IR4</label>
    </interactant>
    <organismsDiffer>false</organismsDiffer>
    <experiments>5</experiments>
</comment>
<comment type="similarity">
    <text evidence="2">Belongs to the herpesviridae ICP22 family.</text>
</comment>
<comment type="sequence caution" evidence="2">
    <conflict type="erroneous initiation">
        <sequence resource="EMBL-CDS" id="AAA46096"/>
    </conflict>
</comment>